<name>MSRB_ECOLC</name>
<gene>
    <name evidence="2" type="primary">msrB</name>
    <name type="ordered locus">EcolC_1854</name>
</gene>
<evidence type="ECO:0000250" key="1"/>
<evidence type="ECO:0000255" key="2">
    <source>
        <dbReference type="HAMAP-Rule" id="MF_01400"/>
    </source>
</evidence>
<evidence type="ECO:0000255" key="3">
    <source>
        <dbReference type="PROSITE-ProRule" id="PRU01126"/>
    </source>
</evidence>
<reference key="1">
    <citation type="submission" date="2008-02" db="EMBL/GenBank/DDBJ databases">
        <title>Complete sequence of Escherichia coli C str. ATCC 8739.</title>
        <authorList>
            <person name="Copeland A."/>
            <person name="Lucas S."/>
            <person name="Lapidus A."/>
            <person name="Glavina del Rio T."/>
            <person name="Dalin E."/>
            <person name="Tice H."/>
            <person name="Bruce D."/>
            <person name="Goodwin L."/>
            <person name="Pitluck S."/>
            <person name="Kiss H."/>
            <person name="Brettin T."/>
            <person name="Detter J.C."/>
            <person name="Han C."/>
            <person name="Kuske C.R."/>
            <person name="Schmutz J."/>
            <person name="Larimer F."/>
            <person name="Land M."/>
            <person name="Hauser L."/>
            <person name="Kyrpides N."/>
            <person name="Mikhailova N."/>
            <person name="Ingram L."/>
            <person name="Richardson P."/>
        </authorList>
    </citation>
    <scope>NUCLEOTIDE SEQUENCE [LARGE SCALE GENOMIC DNA]</scope>
    <source>
        <strain>ATCC 8739 / DSM 1576 / NBRC 3972 / NCIMB 8545 / WDCM 00012 / Crooks</strain>
    </source>
</reference>
<organism>
    <name type="scientific">Escherichia coli (strain ATCC 8739 / DSM 1576 / NBRC 3972 / NCIMB 8545 / WDCM 00012 / Crooks)</name>
    <dbReference type="NCBI Taxonomy" id="481805"/>
    <lineage>
        <taxon>Bacteria</taxon>
        <taxon>Pseudomonadati</taxon>
        <taxon>Pseudomonadota</taxon>
        <taxon>Gammaproteobacteria</taxon>
        <taxon>Enterobacterales</taxon>
        <taxon>Enterobacteriaceae</taxon>
        <taxon>Escherichia</taxon>
    </lineage>
</organism>
<dbReference type="EC" id="1.8.4.12" evidence="2"/>
<dbReference type="EMBL" id="CP000946">
    <property type="protein sequence ID" value="ACA77503.1"/>
    <property type="molecule type" value="Genomic_DNA"/>
</dbReference>
<dbReference type="RefSeq" id="WP_001284613.1">
    <property type="nucleotide sequence ID" value="NZ_MTFT01000006.1"/>
</dbReference>
<dbReference type="SMR" id="B1IPF3"/>
<dbReference type="KEGG" id="ecl:EcolC_1854"/>
<dbReference type="HOGENOM" id="CLU_031040_8_5_6"/>
<dbReference type="GO" id="GO:0005737">
    <property type="term" value="C:cytoplasm"/>
    <property type="evidence" value="ECO:0007669"/>
    <property type="project" value="TreeGrafter"/>
</dbReference>
<dbReference type="GO" id="GO:0033743">
    <property type="term" value="F:peptide-methionine (R)-S-oxide reductase activity"/>
    <property type="evidence" value="ECO:0007669"/>
    <property type="project" value="UniProtKB-UniRule"/>
</dbReference>
<dbReference type="GO" id="GO:0008270">
    <property type="term" value="F:zinc ion binding"/>
    <property type="evidence" value="ECO:0007669"/>
    <property type="project" value="UniProtKB-UniRule"/>
</dbReference>
<dbReference type="GO" id="GO:0030091">
    <property type="term" value="P:protein repair"/>
    <property type="evidence" value="ECO:0007669"/>
    <property type="project" value="InterPro"/>
</dbReference>
<dbReference type="GO" id="GO:0006979">
    <property type="term" value="P:response to oxidative stress"/>
    <property type="evidence" value="ECO:0007669"/>
    <property type="project" value="InterPro"/>
</dbReference>
<dbReference type="FunFam" id="2.170.150.20:FF:000001">
    <property type="entry name" value="Peptide methionine sulfoxide reductase MsrB"/>
    <property type="match status" value="1"/>
</dbReference>
<dbReference type="Gene3D" id="2.170.150.20">
    <property type="entry name" value="Peptide methionine sulfoxide reductase"/>
    <property type="match status" value="1"/>
</dbReference>
<dbReference type="HAMAP" id="MF_01400">
    <property type="entry name" value="MsrB"/>
    <property type="match status" value="1"/>
</dbReference>
<dbReference type="InterPro" id="IPR028427">
    <property type="entry name" value="Met_Sox_Rdtase_MsrB"/>
</dbReference>
<dbReference type="InterPro" id="IPR002579">
    <property type="entry name" value="Met_Sox_Rdtase_MsrB_dom"/>
</dbReference>
<dbReference type="InterPro" id="IPR011057">
    <property type="entry name" value="Mss4-like_sf"/>
</dbReference>
<dbReference type="NCBIfam" id="TIGR00357">
    <property type="entry name" value="peptide-methionine (R)-S-oxide reductase MsrB"/>
    <property type="match status" value="1"/>
</dbReference>
<dbReference type="PANTHER" id="PTHR10173">
    <property type="entry name" value="METHIONINE SULFOXIDE REDUCTASE"/>
    <property type="match status" value="1"/>
</dbReference>
<dbReference type="PANTHER" id="PTHR10173:SF52">
    <property type="entry name" value="METHIONINE-R-SULFOXIDE REDUCTASE B1"/>
    <property type="match status" value="1"/>
</dbReference>
<dbReference type="Pfam" id="PF01641">
    <property type="entry name" value="SelR"/>
    <property type="match status" value="1"/>
</dbReference>
<dbReference type="SUPFAM" id="SSF51316">
    <property type="entry name" value="Mss4-like"/>
    <property type="match status" value="1"/>
</dbReference>
<dbReference type="PROSITE" id="PS51790">
    <property type="entry name" value="MSRB"/>
    <property type="match status" value="1"/>
</dbReference>
<protein>
    <recommendedName>
        <fullName evidence="2">Peptide methionine sulfoxide reductase MsrB</fullName>
        <ecNumber evidence="2">1.8.4.12</ecNumber>
    </recommendedName>
    <alternativeName>
        <fullName evidence="2">Peptide-methionine (R)-S-oxide reductase</fullName>
    </alternativeName>
</protein>
<comment type="catalytic activity">
    <reaction evidence="2">
        <text>L-methionyl-[protein] + [thioredoxin]-disulfide + H2O = L-methionyl-(R)-S-oxide-[protein] + [thioredoxin]-dithiol</text>
        <dbReference type="Rhea" id="RHEA:24164"/>
        <dbReference type="Rhea" id="RHEA-COMP:10698"/>
        <dbReference type="Rhea" id="RHEA-COMP:10700"/>
        <dbReference type="Rhea" id="RHEA-COMP:12313"/>
        <dbReference type="Rhea" id="RHEA-COMP:12314"/>
        <dbReference type="ChEBI" id="CHEBI:15377"/>
        <dbReference type="ChEBI" id="CHEBI:16044"/>
        <dbReference type="ChEBI" id="CHEBI:29950"/>
        <dbReference type="ChEBI" id="CHEBI:45764"/>
        <dbReference type="ChEBI" id="CHEBI:50058"/>
        <dbReference type="EC" id="1.8.4.12"/>
    </reaction>
</comment>
<comment type="cofactor">
    <cofactor evidence="2">
        <name>Zn(2+)</name>
        <dbReference type="ChEBI" id="CHEBI:29105"/>
    </cofactor>
    <text evidence="2">Binds 1 zinc ion per subunit. The zinc ion is important for the structural integrity of the protein.</text>
</comment>
<comment type="similarity">
    <text evidence="2">Belongs to the MsrB Met sulfoxide reductase family.</text>
</comment>
<keyword id="KW-0479">Metal-binding</keyword>
<keyword id="KW-0560">Oxidoreductase</keyword>
<keyword id="KW-0862">Zinc</keyword>
<sequence>MANKPSAEELKKNLSEMQFYVTQNHGTEPPFTGRLLHNKRDGVYHCLICDAPLFHSETKYDSGCGWPSFYEPVSEESIRYIKDLSHGMQRIEIRCGNCDAHLGHVFPDGPQPTGERYCVNSASLRFTDGENGEEING</sequence>
<accession>B1IPF3</accession>
<proteinExistence type="inferred from homology"/>
<feature type="initiator methionine" description="Removed" evidence="1">
    <location>
        <position position="1"/>
    </location>
</feature>
<feature type="chain" id="PRO_1000087337" description="Peptide methionine sulfoxide reductase MsrB">
    <location>
        <begin position="2"/>
        <end position="137"/>
    </location>
</feature>
<feature type="domain" description="MsrB" evidence="3">
    <location>
        <begin position="7"/>
        <end position="129"/>
    </location>
</feature>
<feature type="active site" description="Nucleophile" evidence="3">
    <location>
        <position position="118"/>
    </location>
</feature>
<feature type="binding site" evidence="3">
    <location>
        <position position="46"/>
    </location>
    <ligand>
        <name>Zn(2+)</name>
        <dbReference type="ChEBI" id="CHEBI:29105"/>
    </ligand>
</feature>
<feature type="binding site" evidence="3">
    <location>
        <position position="49"/>
    </location>
    <ligand>
        <name>Zn(2+)</name>
        <dbReference type="ChEBI" id="CHEBI:29105"/>
    </ligand>
</feature>
<feature type="binding site" evidence="3">
    <location>
        <position position="95"/>
    </location>
    <ligand>
        <name>Zn(2+)</name>
        <dbReference type="ChEBI" id="CHEBI:29105"/>
    </ligand>
</feature>
<feature type="binding site" evidence="3">
    <location>
        <position position="98"/>
    </location>
    <ligand>
        <name>Zn(2+)</name>
        <dbReference type="ChEBI" id="CHEBI:29105"/>
    </ligand>
</feature>